<name>LAT2_RABIT</name>
<gene>
    <name evidence="2" type="primary">SLC7A8</name>
    <name evidence="2" type="synonym">LAT2</name>
</gene>
<accession>Q9N1Q4</accession>
<reference evidence="7 8" key="1">
    <citation type="journal article" date="2000" name="Biochim. Biophys. Acta">
        <title>Cloning and functional characterization of a Na(+)-independent, broad-specific neutral amino acid transporter from mammalian intestine.</title>
        <authorList>
            <person name="Rajan D.P."/>
            <person name="Kekuda R."/>
            <person name="Huang W."/>
            <person name="Devoe L.D."/>
            <person name="Leibach F.H."/>
            <person name="Prasad P.D."/>
            <person name="Ganapathy V."/>
        </authorList>
    </citation>
    <scope>NUCLEOTIDE SEQUENCE [MRNA]</scope>
    <scope>FUNCTION</scope>
    <scope>BIOPHYSICOCHEMICAL PROPERTIES</scope>
    <scope>SUBUNIT</scope>
    <scope>TISSUE SPECIFICITY</scope>
    <scope>ACTIVITY REGULATION</scope>
    <source>
        <tissue evidence="6">Intestine</tissue>
    </source>
</reference>
<organism>
    <name type="scientific">Oryctolagus cuniculus</name>
    <name type="common">Rabbit</name>
    <dbReference type="NCBI Taxonomy" id="9986"/>
    <lineage>
        <taxon>Eukaryota</taxon>
        <taxon>Metazoa</taxon>
        <taxon>Chordata</taxon>
        <taxon>Craniata</taxon>
        <taxon>Vertebrata</taxon>
        <taxon>Euteleostomi</taxon>
        <taxon>Mammalia</taxon>
        <taxon>Eutheria</taxon>
        <taxon>Euarchontoglires</taxon>
        <taxon>Glires</taxon>
        <taxon>Lagomorpha</taxon>
        <taxon>Leporidae</taxon>
        <taxon>Oryctolagus</taxon>
    </lineage>
</organism>
<protein>
    <recommendedName>
        <fullName>Large neutral amino acids transporter small subunit 2</fullName>
    </recommendedName>
    <alternativeName>
        <fullName>4F2-LC5</fullName>
    </alternativeName>
    <alternativeName>
        <fullName>L-type amino acid transporter 2</fullName>
    </alternativeName>
    <alternativeName>
        <fullName>Solute carrier family 7 member 8</fullName>
    </alternativeName>
</protein>
<sequence>MEKGARHRHNTDKNHAGGSESEDFPEASSGGGGVALKKEIGLVSACGIIVGNIIGSGIFVSPKGVLENAGSVGLAVIVWIVTGLITAVGALCYAELGVTIPKSGGDYSYVKDIFGGLAGFLRLWIAVLVIYPTNQAVIALTFSNYVLQPLFPTCFPPDSGLRLLAAICLLLLTWVNCSSVRWATRVQDIFTAGKLLALALIIIMGVVQICKGEYFWLEPKNAFDNFQEPDIGLIALAFLQGSFAYGGWNFLNYVTEELVDPYKNLPRAIFISIPLVTFVYVFANVAYITAMSPQELLASNAVAVTFGEKLLGVMAWIMPISVALSTFGGVNGSLFTSSRLFFAGAREGHLPSVLAMIHVKRCTPIPALLFTCLSTLLMLVTSDMYTLINYVGFINYLFYGVTVAGQIVLRWKKPDIPRPIKINLLFPIIYLLFWAFLLIFSLWSEPVVCGIGLAIMLTGVPVYFLGVYWQHKPKCFNDFIELLTLVSQKMCVVVYPEVDGGSGTEGTREDMEEQQQPICQPSPGKDKDSLEQSQP</sequence>
<evidence type="ECO:0000250" key="1">
    <source>
        <dbReference type="UniProtKB" id="Q9QXW9"/>
    </source>
</evidence>
<evidence type="ECO:0000250" key="2">
    <source>
        <dbReference type="UniProtKB" id="Q9UHI5"/>
    </source>
</evidence>
<evidence type="ECO:0000250" key="3">
    <source>
        <dbReference type="UniProtKB" id="Q9WVR6"/>
    </source>
</evidence>
<evidence type="ECO:0000255" key="4"/>
<evidence type="ECO:0000256" key="5">
    <source>
        <dbReference type="SAM" id="MobiDB-lite"/>
    </source>
</evidence>
<evidence type="ECO:0000269" key="6">
    <source>
    </source>
</evidence>
<evidence type="ECO:0000305" key="7"/>
<evidence type="ECO:0000312" key="8">
    <source>
        <dbReference type="EMBL" id="AAF26282.1"/>
    </source>
</evidence>
<comment type="function">
    <text evidence="1 2 3 6">Associates with SLC3A2 to form a functional heterodimeric complex that translocates small and large neutral amino acids with broad specificity and a stoichiometry of 1:1 (PubMed:10631289). Functions as amino acid antiporter mediating the influx of extracellular essential amino acids mainly in exchange with the efflux of highly concentrated intracellular amino acids. Has relatively symmetrical selectivities but strongly asymmetrical substrate affinities at both the intracellular and extracellular sides of the transporter. This asymmetry allows SLC7A8 to regulate intracellular amino acid pools (mM concentrations) by exchange with external amino acids (uM concentration range), equilibrating the relative concentrations of different amino acids across the plasma membrane instead of mediating their net uptake. May play an essential role in the reabsorption of neutral amino acids from the epithelial cells to the bloodstream in the kidney. Involved in the uptake of methylmercury (MeHg) when administered as the L-cysteine or D,L-homocysteine complexes, and hence plays a role in metal ion homeostasis and toxicity. Involved in the cellular activity of small molecular weight nitrosothiols, via the stereoselective transport of L-nitrosocysteine (L-CNSO) across the transmembrane (By similarity). Imports the thyroid hormone diiodothyronine (T2) and to a smaller extent triiodothyronine (T3) but not rT 3 or thyroxine (T4) (By similarity). Mediates the uptake of L-DOPA (By similarity). May participate in auditory function (By similarity).</text>
</comment>
<comment type="catalytic activity">
    <reaction evidence="2">
        <text>L-histidine(in) + L-phenylalanine(out) = L-histidine(out) + L-phenylalanine(in)</text>
        <dbReference type="Rhea" id="RHEA:71003"/>
        <dbReference type="ChEBI" id="CHEBI:57595"/>
        <dbReference type="ChEBI" id="CHEBI:58095"/>
    </reaction>
</comment>
<comment type="catalytic activity">
    <reaction evidence="2">
        <text>L-tryptophan(in) + L-phenylalanine(out) = L-tryptophan(out) + L-phenylalanine(in)</text>
        <dbReference type="Rhea" id="RHEA:71007"/>
        <dbReference type="ChEBI" id="CHEBI:57912"/>
        <dbReference type="ChEBI" id="CHEBI:58095"/>
    </reaction>
</comment>
<comment type="catalytic activity">
    <reaction evidence="2">
        <text>L-isoleucine(in) + L-phenylalanine(out) = L-isoleucine(out) + L-phenylalanine(in)</text>
        <dbReference type="Rhea" id="RHEA:71011"/>
        <dbReference type="ChEBI" id="CHEBI:58045"/>
        <dbReference type="ChEBI" id="CHEBI:58095"/>
    </reaction>
</comment>
<comment type="catalytic activity">
    <reaction evidence="2">
        <text>L-valine(in) + L-phenylalanine(out) = L-valine(out) + L-phenylalanine(in)</text>
        <dbReference type="Rhea" id="RHEA:71019"/>
        <dbReference type="ChEBI" id="CHEBI:57762"/>
        <dbReference type="ChEBI" id="CHEBI:58095"/>
    </reaction>
</comment>
<comment type="catalytic activity">
    <reaction evidence="2">
        <text>L-leucine(in) + L-phenylalanine(out) = L-leucine(out) + L-phenylalanine(in)</text>
        <dbReference type="Rhea" id="RHEA:71023"/>
        <dbReference type="ChEBI" id="CHEBI:57427"/>
        <dbReference type="ChEBI" id="CHEBI:58095"/>
    </reaction>
</comment>
<comment type="catalytic activity">
    <reaction evidence="2">
        <text>L-glutamine(in) + L-phenylalanine(out) = L-glutamine(out) + L-phenylalanine(in)</text>
        <dbReference type="Rhea" id="RHEA:71027"/>
        <dbReference type="ChEBI" id="CHEBI:58095"/>
        <dbReference type="ChEBI" id="CHEBI:58359"/>
    </reaction>
</comment>
<comment type="catalytic activity">
    <reaction evidence="2">
        <text>L-cysteine(in) + L-phenylalanine(out) = L-cysteine(out) + L-phenylalanine(in)</text>
        <dbReference type="Rhea" id="RHEA:71031"/>
        <dbReference type="ChEBI" id="CHEBI:35235"/>
        <dbReference type="ChEBI" id="CHEBI:58095"/>
    </reaction>
</comment>
<comment type="catalytic activity">
    <reaction evidence="2">
        <text>L-phenylalanine(out) + L-methionine(in) = L-phenylalanine(in) + L-methionine(out)</text>
        <dbReference type="Rhea" id="RHEA:71039"/>
        <dbReference type="ChEBI" id="CHEBI:57844"/>
        <dbReference type="ChEBI" id="CHEBI:58095"/>
    </reaction>
</comment>
<comment type="catalytic activity">
    <reaction evidence="2">
        <text>L-leucine(out) + L-methionine(in) = L-leucine(in) + L-methionine(out)</text>
        <dbReference type="Rhea" id="RHEA:71051"/>
        <dbReference type="ChEBI" id="CHEBI:57427"/>
        <dbReference type="ChEBI" id="CHEBI:57844"/>
    </reaction>
</comment>
<comment type="catalytic activity">
    <reaction evidence="2">
        <text>L-cysteine(out) + L-methionine(in) = L-cysteine(in) + L-methionine(out)</text>
        <dbReference type="Rhea" id="RHEA:71055"/>
        <dbReference type="ChEBI" id="CHEBI:35235"/>
        <dbReference type="ChEBI" id="CHEBI:57844"/>
    </reaction>
</comment>
<comment type="catalytic activity">
    <reaction evidence="2">
        <text>S-methylmercury-L-cysteine(out) + L-methionine(in) = S-methylmercury-L-cysteine(in) + L-methionine(out)</text>
        <dbReference type="Rhea" id="RHEA:71103"/>
        <dbReference type="ChEBI" id="CHEBI:57844"/>
        <dbReference type="ChEBI" id="CHEBI:190186"/>
    </reaction>
</comment>
<comment type="catalytic activity">
    <reaction evidence="2">
        <text>S-methylmercury-L-cysteine(in) + L-leucine(out) = S-methylmercury-L-cysteine(out) + L-leucine(in)</text>
        <dbReference type="Rhea" id="RHEA:71107"/>
        <dbReference type="ChEBI" id="CHEBI:57427"/>
        <dbReference type="ChEBI" id="CHEBI:190186"/>
    </reaction>
</comment>
<comment type="catalytic activity">
    <reaction evidence="2">
        <text>S-methylmercury-L-cysteine(in) + L-phenylalanine(out) = S-methylmercury-L-cysteine(out) + L-phenylalanine(in)</text>
        <dbReference type="Rhea" id="RHEA:71111"/>
        <dbReference type="ChEBI" id="CHEBI:58095"/>
        <dbReference type="ChEBI" id="CHEBI:190186"/>
    </reaction>
</comment>
<comment type="catalytic activity">
    <reaction evidence="2">
        <text>L-phenylalanine(out) + L-serine(in) = L-phenylalanine(in) + L-serine(out)</text>
        <dbReference type="Rhea" id="RHEA:71035"/>
        <dbReference type="ChEBI" id="CHEBI:33384"/>
        <dbReference type="ChEBI" id="CHEBI:58095"/>
    </reaction>
</comment>
<comment type="catalytic activity">
    <reaction evidence="2">
        <text>L-phenylalanine(out) + glycine(in) = L-phenylalanine(in) + glycine(out)</text>
        <dbReference type="Rhea" id="RHEA:71047"/>
        <dbReference type="ChEBI" id="CHEBI:57305"/>
        <dbReference type="ChEBI" id="CHEBI:58095"/>
    </reaction>
</comment>
<comment type="catalytic activity">
    <reaction evidence="2">
        <text>L-phenylalanine(out) + L-alanine(in) = L-phenylalanine(in) + L-alanine(out)</text>
        <dbReference type="Rhea" id="RHEA:71043"/>
        <dbReference type="ChEBI" id="CHEBI:57972"/>
        <dbReference type="ChEBI" id="CHEBI:58095"/>
    </reaction>
</comment>
<comment type="catalytic activity">
    <reaction evidence="1">
        <text>3,3',5-triiodo-L-thyronine(out) = 3,3',5-triiodo-L-thyronine(in)</text>
        <dbReference type="Rhea" id="RHEA:71811"/>
        <dbReference type="ChEBI" id="CHEBI:533015"/>
    </reaction>
    <physiologicalReaction direction="left-to-right" evidence="1">
        <dbReference type="Rhea" id="RHEA:71812"/>
    </physiologicalReaction>
</comment>
<comment type="catalytic activity">
    <reaction evidence="1">
        <text>3,3'-diiodo-L-thyronine(out) = 3,3'-diiodo-L-thyronine(in)</text>
        <dbReference type="Rhea" id="RHEA:71823"/>
        <dbReference type="ChEBI" id="CHEBI:176514"/>
    </reaction>
    <physiologicalReaction direction="left-to-right" evidence="1">
        <dbReference type="Rhea" id="RHEA:71824"/>
    </physiologicalReaction>
</comment>
<comment type="catalytic activity">
    <reaction evidence="3">
        <text>L-dopa(out) + L-phenylalanine(in) = L-dopa(in) + L-phenylalanine(out)</text>
        <dbReference type="Rhea" id="RHEA:71439"/>
        <dbReference type="ChEBI" id="CHEBI:57504"/>
        <dbReference type="ChEBI" id="CHEBI:58095"/>
    </reaction>
</comment>
<comment type="activity regulation">
    <text evidence="6">The transporter activity is inhibited by 2-aminobicyclo-(2,2,1)heptane-2-carboxylic acid (BCH) (a specific inhibitor of system L transport).</text>
</comment>
<comment type="biophysicochemical properties">
    <kinetics>
        <KM evidence="6">316 uM for glutamine</KM>
        <KM evidence="6">204 uM for serine</KM>
    </kinetics>
    <phDependence>
        <text evidence="6">Optimum pH is 6.5.</text>
    </phDependence>
</comment>
<comment type="subunit">
    <text evidence="2 6">Disulfide-linked heterodimer composed of the catalytic light chain subunit SLC7A8 and the heavy chain subunit SLC3A2 (PubMed:10631289). SLC3A2 acts as a chaperone for correct plasma membrane trafficking and stabilization of SLC7A8 and modulates the substrate affinity and specificity of SLC7A8. ICAM-1 associates with the heterodimer SLC3A2/SLC7A8; facilitates leucine uptake (By similarity).</text>
</comment>
<comment type="subcellular location">
    <subcellularLocation>
        <location evidence="2">Cell membrane</location>
        <topology evidence="2">Multi-pass membrane protein</topology>
    </subcellularLocation>
    <subcellularLocation>
        <location evidence="2">Basolateral cell membrane</location>
        <topology evidence="2">Multi-pass membrane protein</topology>
    </subcellularLocation>
    <text evidence="2">Localized to the cytoplasm when expressed alone. When coexpressed with SLC3A2/4F2hc, is localized to the plasma membrane. Colocalized with SLC3A2/4F2hc at the basolateral membrane of kidney cortex proximal tubules and small intestine epithelia of the villi.</text>
</comment>
<comment type="tissue specificity">
    <text evidence="6">Mainly expressed in kidney and small intestine.</text>
</comment>
<comment type="similarity">
    <text evidence="4">Belongs to the amino acid-polyamine-organocation (APC) superfamily. L-type amino acid transporter (LAT) (TC 2.A.3.8) family.</text>
</comment>
<keyword id="KW-0029">Amino-acid transport</keyword>
<keyword id="KW-0050">Antiport</keyword>
<keyword id="KW-1003">Cell membrane</keyword>
<keyword id="KW-1015">Disulfide bond</keyword>
<keyword id="KW-0472">Membrane</keyword>
<keyword id="KW-0597">Phosphoprotein</keyword>
<keyword id="KW-1185">Reference proteome</keyword>
<keyword id="KW-0812">Transmembrane</keyword>
<keyword id="KW-1133">Transmembrane helix</keyword>
<keyword id="KW-0813">Transport</keyword>
<feature type="chain" id="PRO_0000252234" description="Large neutral amino acids transporter small subunit 2">
    <location>
        <begin position="1"/>
        <end position="535"/>
    </location>
</feature>
<feature type="topological domain" description="Cytoplasmic" evidence="7">
    <location>
        <begin position="1"/>
        <end position="44"/>
    </location>
</feature>
<feature type="transmembrane region" description="Helical; Name=1" evidence="2">
    <location>
        <begin position="45"/>
        <end position="65"/>
    </location>
</feature>
<feature type="topological domain" description="Extracellular" evidence="7">
    <location>
        <begin position="66"/>
        <end position="73"/>
    </location>
</feature>
<feature type="transmembrane region" description="Helical; Name=2" evidence="2">
    <location>
        <begin position="74"/>
        <end position="95"/>
    </location>
</feature>
<feature type="topological domain" description="Cytoplasmic" evidence="7">
    <location>
        <begin position="96"/>
        <end position="116"/>
    </location>
</feature>
<feature type="transmembrane region" description="Helical; Name=3" evidence="2">
    <location>
        <begin position="117"/>
        <end position="149"/>
    </location>
</feature>
<feature type="topological domain" description="Extracellular" evidence="7">
    <location>
        <begin position="150"/>
        <end position="157"/>
    </location>
</feature>
<feature type="transmembrane region" description="Helical; Name=4" evidence="2">
    <location>
        <begin position="158"/>
        <end position="178"/>
    </location>
</feature>
<feature type="topological domain" description="Cytoplasmic" evidence="7">
    <location>
        <begin position="179"/>
        <end position="181"/>
    </location>
</feature>
<feature type="transmembrane region" description="Helical; Name=5" evidence="2">
    <location>
        <begin position="182"/>
        <end position="210"/>
    </location>
</feature>
<feature type="topological domain" description="Extracellular" evidence="7">
    <location>
        <begin position="211"/>
        <end position="230"/>
    </location>
</feature>
<feature type="transmembrane region" description="Helical; Name=6" evidence="2">
    <location>
        <begin position="231"/>
        <end position="252"/>
    </location>
</feature>
<feature type="topological domain" description="Cytoplasmic" evidence="7">
    <location>
        <begin position="253"/>
        <end position="265"/>
    </location>
</feature>
<feature type="transmembrane region" description="Helical; Name=7" evidence="2">
    <location>
        <begin position="266"/>
        <end position="287"/>
    </location>
</feature>
<feature type="topological domain" description="Extracellular" evidence="7">
    <location>
        <begin position="288"/>
        <end position="312"/>
    </location>
</feature>
<feature type="transmembrane region" description="Helical; Name=8" evidence="2">
    <location>
        <begin position="313"/>
        <end position="338"/>
    </location>
</feature>
<feature type="topological domain" description="Cytoplasmic" evidence="7">
    <location>
        <begin position="339"/>
        <end position="364"/>
    </location>
</feature>
<feature type="transmembrane region" description="Helical; Name=9" evidence="2">
    <location>
        <begin position="365"/>
        <end position="382"/>
    </location>
</feature>
<feature type="topological domain" description="Extracellular" evidence="7">
    <location>
        <begin position="383"/>
        <end position="386"/>
    </location>
</feature>
<feature type="transmembrane region" description="Helical; Name=10" evidence="2">
    <location>
        <begin position="387"/>
        <end position="408"/>
    </location>
</feature>
<feature type="topological domain" description="Cytoplasmic" evidence="7">
    <location>
        <begin position="409"/>
        <end position="423"/>
    </location>
</feature>
<feature type="transmembrane region" description="Helical; Name=11" evidence="2">
    <location>
        <begin position="424"/>
        <end position="446"/>
    </location>
</feature>
<feature type="transmembrane region" description="Helical; Name=12" evidence="2">
    <location>
        <begin position="447"/>
        <end position="466"/>
    </location>
</feature>
<feature type="topological domain" description="Cytoplasmic" evidence="7">
    <location>
        <begin position="467"/>
        <end position="535"/>
    </location>
</feature>
<feature type="region of interest" description="Disordered" evidence="5">
    <location>
        <begin position="1"/>
        <end position="30"/>
    </location>
</feature>
<feature type="region of interest" description="Disordered" evidence="5">
    <location>
        <begin position="500"/>
        <end position="535"/>
    </location>
</feature>
<feature type="compositionally biased region" description="Basic residues" evidence="5">
    <location>
        <begin position="1"/>
        <end position="10"/>
    </location>
</feature>
<feature type="compositionally biased region" description="Basic and acidic residues" evidence="5">
    <location>
        <begin position="524"/>
        <end position="535"/>
    </location>
</feature>
<feature type="binding site" evidence="2">
    <location>
        <position position="53"/>
    </location>
    <ligand>
        <name>L-leucine</name>
        <dbReference type="ChEBI" id="CHEBI:57427"/>
        <note>substrate</note>
    </ligand>
</feature>
<feature type="binding site" evidence="2">
    <location>
        <position position="134"/>
    </location>
    <ligand>
        <name>L-tryptophan</name>
        <dbReference type="ChEBI" id="CHEBI:57912"/>
        <note>substrate</note>
    </ligand>
</feature>
<feature type="binding site" evidence="2">
    <location>
        <position position="246"/>
    </location>
    <ligand>
        <name>L-leucine</name>
        <dbReference type="ChEBI" id="CHEBI:57427"/>
        <note>substrate</note>
    </ligand>
</feature>
<feature type="binding site" evidence="2">
    <location>
        <position position="395"/>
    </location>
    <ligand>
        <name>L-tryptophan</name>
        <dbReference type="ChEBI" id="CHEBI:57912"/>
        <note>substrate</note>
    </ligand>
</feature>
<feature type="site" description="Important for substrate specificity" evidence="2">
    <location>
        <position position="134"/>
    </location>
</feature>
<feature type="site" description="Important for substrate specificity" evidence="2">
    <location>
        <position position="246"/>
    </location>
</feature>
<feature type="modified residue" description="Phosphoserine" evidence="1">
    <location>
        <position position="19"/>
    </location>
</feature>
<feature type="modified residue" description="Phosphoserine" evidence="1">
    <location>
        <position position="28"/>
    </location>
</feature>
<feature type="modified residue" description="Phosphoserine" evidence="1">
    <location>
        <position position="29"/>
    </location>
</feature>
<feature type="modified residue" description="Phosphoserine" evidence="3">
    <location>
        <position position="529"/>
    </location>
</feature>
<feature type="disulfide bond" description="Interchain (with C-110 in SLC3A2)" evidence="2">
    <location>
        <position position="154"/>
    </location>
</feature>
<dbReference type="EMBL" id="AF170106">
    <property type="protein sequence ID" value="AAF26282.1"/>
    <property type="molecule type" value="mRNA"/>
</dbReference>
<dbReference type="RefSeq" id="NP_001076151.1">
    <property type="nucleotide sequence ID" value="NM_001082682.1"/>
</dbReference>
<dbReference type="SMR" id="Q9N1Q4"/>
<dbReference type="FunCoup" id="Q9N1Q4">
    <property type="interactions" value="58"/>
</dbReference>
<dbReference type="STRING" id="9986.ENSOCUP00000019754"/>
<dbReference type="PaxDb" id="9986-ENSOCUP00000019754"/>
<dbReference type="Ensembl" id="ENSOCUT00000022234.1">
    <property type="protein sequence ID" value="ENSOCUP00000019754.1"/>
    <property type="gene ID" value="ENSOCUG00000001685.3"/>
</dbReference>
<dbReference type="GeneID" id="100009408"/>
<dbReference type="KEGG" id="ocu:100009408"/>
<dbReference type="CTD" id="23428"/>
<dbReference type="eggNOG" id="KOG1287">
    <property type="taxonomic scope" value="Eukaryota"/>
</dbReference>
<dbReference type="GeneTree" id="ENSGT00940000158278"/>
<dbReference type="InParanoid" id="Q9N1Q4"/>
<dbReference type="OMA" id="WVSNAAL"/>
<dbReference type="OrthoDB" id="3257095at2759"/>
<dbReference type="TreeFam" id="TF313355"/>
<dbReference type="SABIO-RK" id="Q9N1Q4"/>
<dbReference type="Proteomes" id="UP000001811">
    <property type="component" value="Chromosome 17"/>
</dbReference>
<dbReference type="Bgee" id="ENSOCUG00000001685">
    <property type="expression patterns" value="Expressed in kidney and 18 other cell types or tissues"/>
</dbReference>
<dbReference type="ExpressionAtlas" id="Q9N1Q4">
    <property type="expression patterns" value="baseline"/>
</dbReference>
<dbReference type="GO" id="GO:0016324">
    <property type="term" value="C:apical plasma membrane"/>
    <property type="evidence" value="ECO:0007669"/>
    <property type="project" value="Ensembl"/>
</dbReference>
<dbReference type="GO" id="GO:0016323">
    <property type="term" value="C:basolateral plasma membrane"/>
    <property type="evidence" value="ECO:0007669"/>
    <property type="project" value="UniProtKB-SubCell"/>
</dbReference>
<dbReference type="GO" id="GO:0016020">
    <property type="term" value="C:membrane"/>
    <property type="evidence" value="ECO:0000304"/>
    <property type="project" value="UniProtKB"/>
</dbReference>
<dbReference type="GO" id="GO:0031528">
    <property type="term" value="C:microvillus membrane"/>
    <property type="evidence" value="ECO:0007669"/>
    <property type="project" value="Ensembl"/>
</dbReference>
<dbReference type="GO" id="GO:0015171">
    <property type="term" value="F:amino acid transmembrane transporter activity"/>
    <property type="evidence" value="ECO:0000314"/>
    <property type="project" value="UniProtKB"/>
</dbReference>
<dbReference type="GO" id="GO:0015297">
    <property type="term" value="F:antiporter activity"/>
    <property type="evidence" value="ECO:0007669"/>
    <property type="project" value="UniProtKB-KW"/>
</dbReference>
<dbReference type="GO" id="GO:0015187">
    <property type="term" value="F:glycine transmembrane transporter activity"/>
    <property type="evidence" value="ECO:0007669"/>
    <property type="project" value="Ensembl"/>
</dbReference>
<dbReference type="GO" id="GO:0015180">
    <property type="term" value="F:L-alanine transmembrane transporter activity"/>
    <property type="evidence" value="ECO:0007669"/>
    <property type="project" value="Ensembl"/>
</dbReference>
<dbReference type="GO" id="GO:0015190">
    <property type="term" value="F:L-leucine transmembrane transporter activity"/>
    <property type="evidence" value="ECO:0007669"/>
    <property type="project" value="Ensembl"/>
</dbReference>
<dbReference type="GO" id="GO:0042605">
    <property type="term" value="F:peptide antigen binding"/>
    <property type="evidence" value="ECO:0000353"/>
    <property type="project" value="UniProtKB"/>
</dbReference>
<dbReference type="GO" id="GO:0046982">
    <property type="term" value="F:protein heterodimerization activity"/>
    <property type="evidence" value="ECO:0007669"/>
    <property type="project" value="Ensembl"/>
</dbReference>
<dbReference type="GO" id="GO:0015349">
    <property type="term" value="F:thyroid hormone transmembrane transporter activity"/>
    <property type="evidence" value="ECO:0000250"/>
    <property type="project" value="UniProtKB"/>
</dbReference>
<dbReference type="GO" id="GO:0019534">
    <property type="term" value="F:toxin transmembrane transporter activity"/>
    <property type="evidence" value="ECO:0007669"/>
    <property type="project" value="Ensembl"/>
</dbReference>
<dbReference type="GO" id="GO:1904273">
    <property type="term" value="P:L-alanine import across plasma membrane"/>
    <property type="evidence" value="ECO:0007669"/>
    <property type="project" value="Ensembl"/>
</dbReference>
<dbReference type="GO" id="GO:1903801">
    <property type="term" value="P:L-leucine import across plasma membrane"/>
    <property type="evidence" value="ECO:0007669"/>
    <property type="project" value="Ensembl"/>
</dbReference>
<dbReference type="GO" id="GO:0015804">
    <property type="term" value="P:neutral amino acid transport"/>
    <property type="evidence" value="ECO:0000314"/>
    <property type="project" value="UniProtKB"/>
</dbReference>
<dbReference type="GO" id="GO:0035524">
    <property type="term" value="P:proline transmembrane transport"/>
    <property type="evidence" value="ECO:0007669"/>
    <property type="project" value="Ensembl"/>
</dbReference>
<dbReference type="GO" id="GO:0070327">
    <property type="term" value="P:thyroid hormone transport"/>
    <property type="evidence" value="ECO:0000250"/>
    <property type="project" value="UniProtKB"/>
</dbReference>
<dbReference type="GO" id="GO:0015827">
    <property type="term" value="P:tryptophan transport"/>
    <property type="evidence" value="ECO:0007669"/>
    <property type="project" value="Ensembl"/>
</dbReference>
<dbReference type="GO" id="GO:0015829">
    <property type="term" value="P:valine transport"/>
    <property type="evidence" value="ECO:0007669"/>
    <property type="project" value="Ensembl"/>
</dbReference>
<dbReference type="FunFam" id="1.20.1740.10:FF:000008">
    <property type="entry name" value="large neutral amino acids transporter small subunit 2"/>
    <property type="match status" value="1"/>
</dbReference>
<dbReference type="Gene3D" id="1.20.1740.10">
    <property type="entry name" value="Amino acid/polyamine transporter I"/>
    <property type="match status" value="1"/>
</dbReference>
<dbReference type="InterPro" id="IPR002293">
    <property type="entry name" value="AA/rel_permease1"/>
</dbReference>
<dbReference type="InterPro" id="IPR050598">
    <property type="entry name" value="AminoAcid_Transporter"/>
</dbReference>
<dbReference type="InterPro" id="IPR004760">
    <property type="entry name" value="L_AA_transporter"/>
</dbReference>
<dbReference type="NCBIfam" id="TIGR00911">
    <property type="entry name" value="2A0308"/>
    <property type="match status" value="1"/>
</dbReference>
<dbReference type="PANTHER" id="PTHR11785">
    <property type="entry name" value="AMINO ACID TRANSPORTER"/>
    <property type="match status" value="1"/>
</dbReference>
<dbReference type="PANTHER" id="PTHR11785:SF113">
    <property type="entry name" value="LARGE NEUTRAL AMINO ACIDS TRANSPORTER SMALL SUBUNIT 2"/>
    <property type="match status" value="1"/>
</dbReference>
<dbReference type="Pfam" id="PF13520">
    <property type="entry name" value="AA_permease_2"/>
    <property type="match status" value="1"/>
</dbReference>
<dbReference type="PIRSF" id="PIRSF006060">
    <property type="entry name" value="AA_transporter"/>
    <property type="match status" value="1"/>
</dbReference>
<proteinExistence type="evidence at protein level"/>